<evidence type="ECO:0000255" key="1">
    <source>
        <dbReference type="HAMAP-Rule" id="MF_01145"/>
    </source>
</evidence>
<proteinExistence type="inferred from homology"/>
<accession>Q5X9P6</accession>
<feature type="signal peptide" evidence="1">
    <location>
        <begin position="1"/>
        <end position="22"/>
    </location>
</feature>
<feature type="chain" id="PRO_0000029334" description="Foldase protein PrsA 2">
    <location>
        <begin position="23"/>
        <end position="309"/>
    </location>
</feature>
<feature type="domain" description="PpiC" evidence="1">
    <location>
        <begin position="146"/>
        <end position="241"/>
    </location>
</feature>
<feature type="lipid moiety-binding region" description="N-palmitoyl cysteine" evidence="1">
    <location>
        <position position="23"/>
    </location>
</feature>
<feature type="lipid moiety-binding region" description="S-diacylglycerol cysteine" evidence="1">
    <location>
        <position position="23"/>
    </location>
</feature>
<dbReference type="EC" id="5.2.1.8" evidence="1"/>
<dbReference type="EMBL" id="CP000003">
    <property type="protein sequence ID" value="AAT87867.1"/>
    <property type="molecule type" value="Genomic_DNA"/>
</dbReference>
<dbReference type="SMR" id="Q5X9P6"/>
<dbReference type="KEGG" id="spa:M6_Spy1732"/>
<dbReference type="HOGENOM" id="CLU_034646_6_0_9"/>
<dbReference type="Proteomes" id="UP000001167">
    <property type="component" value="Chromosome"/>
</dbReference>
<dbReference type="GO" id="GO:0005886">
    <property type="term" value="C:plasma membrane"/>
    <property type="evidence" value="ECO:0007669"/>
    <property type="project" value="UniProtKB-SubCell"/>
</dbReference>
<dbReference type="GO" id="GO:0003755">
    <property type="term" value="F:peptidyl-prolyl cis-trans isomerase activity"/>
    <property type="evidence" value="ECO:0007669"/>
    <property type="project" value="UniProtKB-UniRule"/>
</dbReference>
<dbReference type="GO" id="GO:0006457">
    <property type="term" value="P:protein folding"/>
    <property type="evidence" value="ECO:0007669"/>
    <property type="project" value="UniProtKB-UniRule"/>
</dbReference>
<dbReference type="Gene3D" id="3.10.50.40">
    <property type="match status" value="1"/>
</dbReference>
<dbReference type="Gene3D" id="1.10.4030.10">
    <property type="entry name" value="Porin chaperone SurA, peptide-binding domain"/>
    <property type="match status" value="1"/>
</dbReference>
<dbReference type="HAMAP" id="MF_01145">
    <property type="entry name" value="Foldase_PrsA"/>
    <property type="match status" value="1"/>
</dbReference>
<dbReference type="InterPro" id="IPR023059">
    <property type="entry name" value="Foldase_PrsA"/>
</dbReference>
<dbReference type="InterPro" id="IPR046357">
    <property type="entry name" value="PPIase_dom_sf"/>
</dbReference>
<dbReference type="InterPro" id="IPR000297">
    <property type="entry name" value="PPIase_PpiC"/>
</dbReference>
<dbReference type="InterPro" id="IPR050245">
    <property type="entry name" value="PrsA_foldase"/>
</dbReference>
<dbReference type="InterPro" id="IPR027304">
    <property type="entry name" value="Trigger_fact/SurA_dom_sf"/>
</dbReference>
<dbReference type="NCBIfam" id="NF002361">
    <property type="entry name" value="PRK01326.1"/>
    <property type="match status" value="1"/>
</dbReference>
<dbReference type="NCBIfam" id="NF009105">
    <property type="entry name" value="PRK12450.1"/>
    <property type="match status" value="1"/>
</dbReference>
<dbReference type="PANTHER" id="PTHR47245:SF1">
    <property type="entry name" value="FOLDASE PROTEIN PRSA"/>
    <property type="match status" value="1"/>
</dbReference>
<dbReference type="PANTHER" id="PTHR47245">
    <property type="entry name" value="PEPTIDYLPROLYL ISOMERASE"/>
    <property type="match status" value="1"/>
</dbReference>
<dbReference type="Pfam" id="PF13145">
    <property type="entry name" value="Rotamase_2"/>
    <property type="match status" value="1"/>
</dbReference>
<dbReference type="SUPFAM" id="SSF54534">
    <property type="entry name" value="FKBP-like"/>
    <property type="match status" value="1"/>
</dbReference>
<dbReference type="SUPFAM" id="SSF109998">
    <property type="entry name" value="Triger factor/SurA peptide-binding domain-like"/>
    <property type="match status" value="1"/>
</dbReference>
<dbReference type="PROSITE" id="PS50198">
    <property type="entry name" value="PPIC_PPIASE_2"/>
    <property type="match status" value="1"/>
</dbReference>
<dbReference type="PROSITE" id="PS51257">
    <property type="entry name" value="PROKAR_LIPOPROTEIN"/>
    <property type="match status" value="1"/>
</dbReference>
<protein>
    <recommendedName>
        <fullName evidence="1">Foldase protein PrsA 2</fullName>
        <ecNumber evidence="1">5.2.1.8</ecNumber>
    </recommendedName>
</protein>
<organism>
    <name type="scientific">Streptococcus pyogenes serotype M6 (strain ATCC BAA-946 / MGAS10394)</name>
    <dbReference type="NCBI Taxonomy" id="286636"/>
    <lineage>
        <taxon>Bacteria</taxon>
        <taxon>Bacillati</taxon>
        <taxon>Bacillota</taxon>
        <taxon>Bacilli</taxon>
        <taxon>Lactobacillales</taxon>
        <taxon>Streptococcaceae</taxon>
        <taxon>Streptococcus</taxon>
    </lineage>
</organism>
<comment type="function">
    <text evidence="1">Plays a major role in protein secretion by helping the post-translocational extracellular folding of several secreted proteins.</text>
</comment>
<comment type="catalytic activity">
    <reaction evidence="1">
        <text>[protein]-peptidylproline (omega=180) = [protein]-peptidylproline (omega=0)</text>
        <dbReference type="Rhea" id="RHEA:16237"/>
        <dbReference type="Rhea" id="RHEA-COMP:10747"/>
        <dbReference type="Rhea" id="RHEA-COMP:10748"/>
        <dbReference type="ChEBI" id="CHEBI:83833"/>
        <dbReference type="ChEBI" id="CHEBI:83834"/>
        <dbReference type="EC" id="5.2.1.8"/>
    </reaction>
</comment>
<comment type="subcellular location">
    <subcellularLocation>
        <location evidence="1">Cell membrane</location>
        <topology evidence="1">Lipid-anchor</topology>
    </subcellularLocation>
</comment>
<comment type="similarity">
    <text evidence="1">Belongs to the PrsA family.</text>
</comment>
<gene>
    <name evidence="1" type="primary">prsA2</name>
    <name type="ordered locus">M6_Spy1732</name>
</gene>
<sequence>MKQMNKLITGVVTLATVVTLSACQSSHNNTKLVSMKGDTITVSDFYNETKNTELAQKAMLSLVISRVFETQYANKVSDKEVEKAYKQTADQYGTSFKTVLAQSGLTPETYKKQIRLTKLVEYAVKEQAKNETISKKDYRQAYDAYTPTMTAEIMQFEKEEDAKAALEAVKAEGADFAAIAKEKTIAADKKTTYTFDSGETTLPAEVVRAASGLKEGNRSEIITALDPAISKRTYHIIKVTKKATKKADWKAYQKRLKDIIVTGKLKDPDFQNKVIAKALDKANVKIKDKAFANILAQFAKPNQKQPAQK</sequence>
<name>PRSA2_STRP6</name>
<keyword id="KW-1003">Cell membrane</keyword>
<keyword id="KW-0413">Isomerase</keyword>
<keyword id="KW-0449">Lipoprotein</keyword>
<keyword id="KW-0472">Membrane</keyword>
<keyword id="KW-0564">Palmitate</keyword>
<keyword id="KW-0697">Rotamase</keyword>
<keyword id="KW-0732">Signal</keyword>
<reference key="1">
    <citation type="journal article" date="2004" name="J. Infect. Dis.">
        <title>Progress toward characterization of the group A Streptococcus metagenome: complete genome sequence of a macrolide-resistant serotype M6 strain.</title>
        <authorList>
            <person name="Banks D.J."/>
            <person name="Porcella S.F."/>
            <person name="Barbian K.D."/>
            <person name="Beres S.B."/>
            <person name="Philips L.E."/>
            <person name="Voyich J.M."/>
            <person name="DeLeo F.R."/>
            <person name="Martin J.M."/>
            <person name="Somerville G.A."/>
            <person name="Musser J.M."/>
        </authorList>
    </citation>
    <scope>NUCLEOTIDE SEQUENCE [LARGE SCALE GENOMIC DNA]</scope>
    <source>
        <strain>ATCC BAA-946 / MGAS10394</strain>
    </source>
</reference>